<keyword id="KW-0749">Sporulation</keyword>
<evidence type="ECO:0000255" key="1">
    <source>
        <dbReference type="HAMAP-Rule" id="MF_01506"/>
    </source>
</evidence>
<dbReference type="EMBL" id="CP001283">
    <property type="protein sequence ID" value="ACK87921.1"/>
    <property type="molecule type" value="Genomic_DNA"/>
</dbReference>
<dbReference type="RefSeq" id="WP_001133509.1">
    <property type="nucleotide sequence ID" value="NC_011773.1"/>
</dbReference>
<dbReference type="SMR" id="B7JI37"/>
<dbReference type="GeneID" id="93007575"/>
<dbReference type="KEGG" id="bcu:BCAH820_3619"/>
<dbReference type="HOGENOM" id="CLU_178266_1_0_9"/>
<dbReference type="Proteomes" id="UP000001363">
    <property type="component" value="Chromosome"/>
</dbReference>
<dbReference type="GO" id="GO:0030436">
    <property type="term" value="P:asexual sporulation"/>
    <property type="evidence" value="ECO:0007669"/>
    <property type="project" value="UniProtKB-UniRule"/>
</dbReference>
<dbReference type="GO" id="GO:0030435">
    <property type="term" value="P:sporulation resulting in formation of a cellular spore"/>
    <property type="evidence" value="ECO:0007669"/>
    <property type="project" value="UniProtKB-KW"/>
</dbReference>
<dbReference type="HAMAP" id="MF_01506">
    <property type="entry name" value="Tlp"/>
    <property type="match status" value="1"/>
</dbReference>
<dbReference type="InterPro" id="IPR017524">
    <property type="entry name" value="SASP_thioredoxin-like"/>
</dbReference>
<dbReference type="NCBIfam" id="TIGR03090">
    <property type="entry name" value="SASP_tlp"/>
    <property type="match status" value="1"/>
</dbReference>
<dbReference type="Pfam" id="PF19824">
    <property type="entry name" value="Tlp"/>
    <property type="match status" value="1"/>
</dbReference>
<feature type="chain" id="PRO_1000196949" description="Small, acid-soluble spore protein Tlp">
    <location>
        <begin position="1"/>
        <end position="65"/>
    </location>
</feature>
<proteinExistence type="inferred from homology"/>
<protein>
    <recommendedName>
        <fullName evidence="1">Small, acid-soluble spore protein Tlp</fullName>
    </recommendedName>
</protein>
<reference key="1">
    <citation type="submission" date="2008-10" db="EMBL/GenBank/DDBJ databases">
        <title>Genome sequence of Bacillus cereus AH820.</title>
        <authorList>
            <person name="Dodson R.J."/>
            <person name="Durkin A.S."/>
            <person name="Rosovitz M.J."/>
            <person name="Rasko D.A."/>
            <person name="Hoffmaster A."/>
            <person name="Ravel J."/>
            <person name="Sutton G."/>
        </authorList>
    </citation>
    <scope>NUCLEOTIDE SEQUENCE [LARGE SCALE GENOMIC DNA]</scope>
    <source>
        <strain>AH820</strain>
    </source>
</reference>
<accession>B7JI37</accession>
<gene>
    <name evidence="1" type="primary">tlp</name>
    <name type="ordered locus">BCAH820_3619</name>
</gene>
<sequence>MPNPDNRSDNAEKLQEMVQNTIDNFNEAKETAELSNEKDRSAIEAKNQRRLESIDSLKSEIKDES</sequence>
<name>TLP_BACC0</name>
<comment type="subcellular location">
    <subcellularLocation>
        <location evidence="1">Spore core</location>
    </subcellularLocation>
</comment>
<comment type="induction">
    <text evidence="1">Expressed only in the forespore compartment of sporulating cells.</text>
</comment>
<comment type="similarity">
    <text evidence="1">Belongs to the Tlp family.</text>
</comment>
<organism>
    <name type="scientific">Bacillus cereus (strain AH820)</name>
    <dbReference type="NCBI Taxonomy" id="405535"/>
    <lineage>
        <taxon>Bacteria</taxon>
        <taxon>Bacillati</taxon>
        <taxon>Bacillota</taxon>
        <taxon>Bacilli</taxon>
        <taxon>Bacillales</taxon>
        <taxon>Bacillaceae</taxon>
        <taxon>Bacillus</taxon>
        <taxon>Bacillus cereus group</taxon>
    </lineage>
</organism>